<name>RS10_BACHK</name>
<sequence>MAKEKIRIRLKAYDHRILDQSAEKIVETAKRSGATVSGPIPLPTEKTVYTILRAVHKYKDSREQFEMRTHKRLIDIVSPTPQTVDSLMRLDLPSGVDIEIKL</sequence>
<keyword id="KW-0687">Ribonucleoprotein</keyword>
<keyword id="KW-0689">Ribosomal protein</keyword>
<protein>
    <recommendedName>
        <fullName evidence="1">Small ribosomal subunit protein uS10</fullName>
    </recommendedName>
    <alternativeName>
        <fullName evidence="2">30S ribosomal protein S10</fullName>
    </alternativeName>
</protein>
<comment type="function">
    <text evidence="1">Involved in the binding of tRNA to the ribosomes.</text>
</comment>
<comment type="subunit">
    <text evidence="1">Part of the 30S ribosomal subunit.</text>
</comment>
<comment type="similarity">
    <text evidence="1">Belongs to the universal ribosomal protein uS10 family.</text>
</comment>
<reference key="1">
    <citation type="journal article" date="2006" name="J. Bacteriol.">
        <title>Pathogenomic sequence analysis of Bacillus cereus and Bacillus thuringiensis isolates closely related to Bacillus anthracis.</title>
        <authorList>
            <person name="Han C.S."/>
            <person name="Xie G."/>
            <person name="Challacombe J.F."/>
            <person name="Altherr M.R."/>
            <person name="Bhotika S.S."/>
            <person name="Bruce D."/>
            <person name="Campbell C.S."/>
            <person name="Campbell M.L."/>
            <person name="Chen J."/>
            <person name="Chertkov O."/>
            <person name="Cleland C."/>
            <person name="Dimitrijevic M."/>
            <person name="Doggett N.A."/>
            <person name="Fawcett J.J."/>
            <person name="Glavina T."/>
            <person name="Goodwin L.A."/>
            <person name="Hill K.K."/>
            <person name="Hitchcock P."/>
            <person name="Jackson P.J."/>
            <person name="Keim P."/>
            <person name="Kewalramani A.R."/>
            <person name="Longmire J."/>
            <person name="Lucas S."/>
            <person name="Malfatti S."/>
            <person name="McMurry K."/>
            <person name="Meincke L.J."/>
            <person name="Misra M."/>
            <person name="Moseman B.L."/>
            <person name="Mundt M."/>
            <person name="Munk A.C."/>
            <person name="Okinaka R.T."/>
            <person name="Parson-Quintana B."/>
            <person name="Reilly L.P."/>
            <person name="Richardson P."/>
            <person name="Robinson D.L."/>
            <person name="Rubin E."/>
            <person name="Saunders E."/>
            <person name="Tapia R."/>
            <person name="Tesmer J.G."/>
            <person name="Thayer N."/>
            <person name="Thompson L.S."/>
            <person name="Tice H."/>
            <person name="Ticknor L.O."/>
            <person name="Wills P.L."/>
            <person name="Brettin T.S."/>
            <person name="Gilna P."/>
        </authorList>
    </citation>
    <scope>NUCLEOTIDE SEQUENCE [LARGE SCALE GENOMIC DNA]</scope>
    <source>
        <strain>97-27</strain>
    </source>
</reference>
<accession>Q6HPQ9</accession>
<feature type="chain" id="PRO_0000146493" description="Small ribosomal subunit protein uS10">
    <location>
        <begin position="1"/>
        <end position="102"/>
    </location>
</feature>
<organism>
    <name type="scientific">Bacillus thuringiensis subsp. konkukian (strain 97-27)</name>
    <dbReference type="NCBI Taxonomy" id="281309"/>
    <lineage>
        <taxon>Bacteria</taxon>
        <taxon>Bacillati</taxon>
        <taxon>Bacillota</taxon>
        <taxon>Bacilli</taxon>
        <taxon>Bacillales</taxon>
        <taxon>Bacillaceae</taxon>
        <taxon>Bacillus</taxon>
        <taxon>Bacillus cereus group</taxon>
    </lineage>
</organism>
<gene>
    <name evidence="1" type="primary">rpsJ</name>
    <name type="ordered locus">BT9727_0105</name>
</gene>
<dbReference type="EMBL" id="AE017355">
    <property type="protein sequence ID" value="AAT61474.1"/>
    <property type="molecule type" value="Genomic_DNA"/>
</dbReference>
<dbReference type="RefSeq" id="WP_001040596.1">
    <property type="nucleotide sequence ID" value="NC_005957.1"/>
</dbReference>
<dbReference type="RefSeq" id="YP_034461.1">
    <property type="nucleotide sequence ID" value="NC_005957.1"/>
</dbReference>
<dbReference type="SMR" id="Q6HPQ9"/>
<dbReference type="GeneID" id="93010944"/>
<dbReference type="KEGG" id="btk:BT9727_0105"/>
<dbReference type="PATRIC" id="fig|281309.8.peg.106"/>
<dbReference type="HOGENOM" id="CLU_122625_1_3_9"/>
<dbReference type="PRO" id="PR:Q6HPQ9"/>
<dbReference type="Proteomes" id="UP000001301">
    <property type="component" value="Chromosome"/>
</dbReference>
<dbReference type="GO" id="GO:1990904">
    <property type="term" value="C:ribonucleoprotein complex"/>
    <property type="evidence" value="ECO:0007669"/>
    <property type="project" value="UniProtKB-KW"/>
</dbReference>
<dbReference type="GO" id="GO:0005840">
    <property type="term" value="C:ribosome"/>
    <property type="evidence" value="ECO:0007669"/>
    <property type="project" value="UniProtKB-KW"/>
</dbReference>
<dbReference type="GO" id="GO:0003735">
    <property type="term" value="F:structural constituent of ribosome"/>
    <property type="evidence" value="ECO:0007669"/>
    <property type="project" value="InterPro"/>
</dbReference>
<dbReference type="GO" id="GO:0000049">
    <property type="term" value="F:tRNA binding"/>
    <property type="evidence" value="ECO:0007669"/>
    <property type="project" value="UniProtKB-UniRule"/>
</dbReference>
<dbReference type="GO" id="GO:0006412">
    <property type="term" value="P:translation"/>
    <property type="evidence" value="ECO:0007669"/>
    <property type="project" value="UniProtKB-UniRule"/>
</dbReference>
<dbReference type="FunFam" id="3.30.70.600:FF:000001">
    <property type="entry name" value="30S ribosomal protein S10"/>
    <property type="match status" value="1"/>
</dbReference>
<dbReference type="Gene3D" id="3.30.70.600">
    <property type="entry name" value="Ribosomal protein S10 domain"/>
    <property type="match status" value="1"/>
</dbReference>
<dbReference type="HAMAP" id="MF_00508">
    <property type="entry name" value="Ribosomal_uS10"/>
    <property type="match status" value="1"/>
</dbReference>
<dbReference type="InterPro" id="IPR001848">
    <property type="entry name" value="Ribosomal_uS10"/>
</dbReference>
<dbReference type="InterPro" id="IPR018268">
    <property type="entry name" value="Ribosomal_uS10_CS"/>
</dbReference>
<dbReference type="InterPro" id="IPR027486">
    <property type="entry name" value="Ribosomal_uS10_dom"/>
</dbReference>
<dbReference type="InterPro" id="IPR036838">
    <property type="entry name" value="Ribosomal_uS10_dom_sf"/>
</dbReference>
<dbReference type="NCBIfam" id="NF001861">
    <property type="entry name" value="PRK00596.1"/>
    <property type="match status" value="1"/>
</dbReference>
<dbReference type="NCBIfam" id="TIGR01049">
    <property type="entry name" value="rpsJ_bact"/>
    <property type="match status" value="1"/>
</dbReference>
<dbReference type="PANTHER" id="PTHR11700">
    <property type="entry name" value="30S RIBOSOMAL PROTEIN S10 FAMILY MEMBER"/>
    <property type="match status" value="1"/>
</dbReference>
<dbReference type="Pfam" id="PF00338">
    <property type="entry name" value="Ribosomal_S10"/>
    <property type="match status" value="1"/>
</dbReference>
<dbReference type="PRINTS" id="PR00971">
    <property type="entry name" value="RIBOSOMALS10"/>
</dbReference>
<dbReference type="SMART" id="SM01403">
    <property type="entry name" value="Ribosomal_S10"/>
    <property type="match status" value="1"/>
</dbReference>
<dbReference type="SUPFAM" id="SSF54999">
    <property type="entry name" value="Ribosomal protein S10"/>
    <property type="match status" value="1"/>
</dbReference>
<dbReference type="PROSITE" id="PS00361">
    <property type="entry name" value="RIBOSOMAL_S10"/>
    <property type="match status" value="1"/>
</dbReference>
<evidence type="ECO:0000255" key="1">
    <source>
        <dbReference type="HAMAP-Rule" id="MF_00508"/>
    </source>
</evidence>
<evidence type="ECO:0000305" key="2"/>
<proteinExistence type="inferred from homology"/>